<proteinExistence type="inferred from homology"/>
<dbReference type="EMBL" id="CP000705">
    <property type="protein sequence ID" value="ABQ83715.1"/>
    <property type="molecule type" value="Genomic_DNA"/>
</dbReference>
<dbReference type="RefSeq" id="WP_003664546.1">
    <property type="nucleotide sequence ID" value="NZ_AZDD01000010.1"/>
</dbReference>
<dbReference type="SMR" id="A5VLJ1"/>
<dbReference type="STRING" id="557436.Lreu_1469"/>
<dbReference type="GeneID" id="77191465"/>
<dbReference type="KEGG" id="lre:Lreu_1469"/>
<dbReference type="eggNOG" id="COG0096">
    <property type="taxonomic scope" value="Bacteria"/>
</dbReference>
<dbReference type="HOGENOM" id="CLU_098428_0_2_9"/>
<dbReference type="Proteomes" id="UP000001991">
    <property type="component" value="Chromosome"/>
</dbReference>
<dbReference type="GO" id="GO:1990904">
    <property type="term" value="C:ribonucleoprotein complex"/>
    <property type="evidence" value="ECO:0007669"/>
    <property type="project" value="UniProtKB-KW"/>
</dbReference>
<dbReference type="GO" id="GO:0005840">
    <property type="term" value="C:ribosome"/>
    <property type="evidence" value="ECO:0007669"/>
    <property type="project" value="UniProtKB-KW"/>
</dbReference>
<dbReference type="GO" id="GO:0019843">
    <property type="term" value="F:rRNA binding"/>
    <property type="evidence" value="ECO:0007669"/>
    <property type="project" value="UniProtKB-UniRule"/>
</dbReference>
<dbReference type="GO" id="GO:0003735">
    <property type="term" value="F:structural constituent of ribosome"/>
    <property type="evidence" value="ECO:0007669"/>
    <property type="project" value="InterPro"/>
</dbReference>
<dbReference type="GO" id="GO:0006412">
    <property type="term" value="P:translation"/>
    <property type="evidence" value="ECO:0007669"/>
    <property type="project" value="UniProtKB-UniRule"/>
</dbReference>
<dbReference type="FunFam" id="3.30.1370.30:FF:000002">
    <property type="entry name" value="30S ribosomal protein S8"/>
    <property type="match status" value="1"/>
</dbReference>
<dbReference type="FunFam" id="3.30.1490.10:FF:000001">
    <property type="entry name" value="30S ribosomal protein S8"/>
    <property type="match status" value="1"/>
</dbReference>
<dbReference type="Gene3D" id="3.30.1370.30">
    <property type="match status" value="1"/>
</dbReference>
<dbReference type="Gene3D" id="3.30.1490.10">
    <property type="match status" value="1"/>
</dbReference>
<dbReference type="HAMAP" id="MF_01302_B">
    <property type="entry name" value="Ribosomal_uS8_B"/>
    <property type="match status" value="1"/>
</dbReference>
<dbReference type="InterPro" id="IPR000630">
    <property type="entry name" value="Ribosomal_uS8"/>
</dbReference>
<dbReference type="InterPro" id="IPR047863">
    <property type="entry name" value="Ribosomal_uS8_CS"/>
</dbReference>
<dbReference type="InterPro" id="IPR035987">
    <property type="entry name" value="Ribosomal_uS8_sf"/>
</dbReference>
<dbReference type="NCBIfam" id="NF001109">
    <property type="entry name" value="PRK00136.1"/>
    <property type="match status" value="1"/>
</dbReference>
<dbReference type="PANTHER" id="PTHR11758">
    <property type="entry name" value="40S RIBOSOMAL PROTEIN S15A"/>
    <property type="match status" value="1"/>
</dbReference>
<dbReference type="Pfam" id="PF00410">
    <property type="entry name" value="Ribosomal_S8"/>
    <property type="match status" value="1"/>
</dbReference>
<dbReference type="SUPFAM" id="SSF56047">
    <property type="entry name" value="Ribosomal protein S8"/>
    <property type="match status" value="1"/>
</dbReference>
<dbReference type="PROSITE" id="PS00053">
    <property type="entry name" value="RIBOSOMAL_S8"/>
    <property type="match status" value="1"/>
</dbReference>
<feature type="chain" id="PRO_1000067488" description="Small ribosomal subunit protein uS8">
    <location>
        <begin position="1"/>
        <end position="132"/>
    </location>
</feature>
<name>RS8_LIMRD</name>
<comment type="function">
    <text evidence="1">One of the primary rRNA binding proteins, it binds directly to 16S rRNA central domain where it helps coordinate assembly of the platform of the 30S subunit.</text>
</comment>
<comment type="subunit">
    <text evidence="1">Part of the 30S ribosomal subunit. Contacts proteins S5 and S12.</text>
</comment>
<comment type="similarity">
    <text evidence="1">Belongs to the universal ribosomal protein uS8 family.</text>
</comment>
<organism>
    <name type="scientific">Limosilactobacillus reuteri (strain DSM 20016)</name>
    <name type="common">Lactobacillus reuteri</name>
    <dbReference type="NCBI Taxonomy" id="557436"/>
    <lineage>
        <taxon>Bacteria</taxon>
        <taxon>Bacillati</taxon>
        <taxon>Bacillota</taxon>
        <taxon>Bacilli</taxon>
        <taxon>Lactobacillales</taxon>
        <taxon>Lactobacillaceae</taxon>
        <taxon>Limosilactobacillus</taxon>
    </lineage>
</organism>
<protein>
    <recommendedName>
        <fullName evidence="1">Small ribosomal subunit protein uS8</fullName>
    </recommendedName>
    <alternativeName>
        <fullName evidence="2">30S ribosomal protein S8</fullName>
    </alternativeName>
</protein>
<reference key="1">
    <citation type="journal article" date="2011" name="PLoS Genet.">
        <title>The evolution of host specialization in the vertebrate gut symbiont Lactobacillus reuteri.</title>
        <authorList>
            <person name="Frese S.A."/>
            <person name="Benson A.K."/>
            <person name="Tannock G.W."/>
            <person name="Loach D.M."/>
            <person name="Kim J."/>
            <person name="Zhang M."/>
            <person name="Oh P.L."/>
            <person name="Heng N.C."/>
            <person name="Patil P.B."/>
            <person name="Juge N."/>
            <person name="Mackenzie D.A."/>
            <person name="Pearson B.M."/>
            <person name="Lapidus A."/>
            <person name="Dalin E."/>
            <person name="Tice H."/>
            <person name="Goltsman E."/>
            <person name="Land M."/>
            <person name="Hauser L."/>
            <person name="Ivanova N."/>
            <person name="Kyrpides N.C."/>
            <person name="Walter J."/>
        </authorList>
    </citation>
    <scope>NUCLEOTIDE SEQUENCE [LARGE SCALE GENOMIC DNA]</scope>
    <source>
        <strain>DSM 20016</strain>
    </source>
</reference>
<sequence length="132" mass="14536">MSMSDPIADFLTRIRNANMAQHESVEAPASKMKKDIAEILKNEGFIRDVEYVDDNKQGIIRVFLKYGNDGQRVISGLKRISKPGLRTYVKSDAVPKVLNGLGIAIISTSEGVVTDKVARAKKIGGEVIAYVW</sequence>
<evidence type="ECO:0000255" key="1">
    <source>
        <dbReference type="HAMAP-Rule" id="MF_01302"/>
    </source>
</evidence>
<evidence type="ECO:0000305" key="2"/>
<gene>
    <name evidence="1" type="primary">rpsH</name>
    <name type="ordered locus">Lreu_1469</name>
</gene>
<keyword id="KW-1185">Reference proteome</keyword>
<keyword id="KW-0687">Ribonucleoprotein</keyword>
<keyword id="KW-0689">Ribosomal protein</keyword>
<keyword id="KW-0694">RNA-binding</keyword>
<keyword id="KW-0699">rRNA-binding</keyword>
<accession>A5VLJ1</accession>